<keyword id="KW-0067">ATP-binding</keyword>
<keyword id="KW-0119">Carbohydrate metabolism</keyword>
<keyword id="KW-0320">Glycogen biosynthesis</keyword>
<keyword id="KW-0321">Glycogen metabolism</keyword>
<keyword id="KW-0547">Nucleotide-binding</keyword>
<keyword id="KW-0548">Nucleotidyltransferase</keyword>
<keyword id="KW-1185">Reference proteome</keyword>
<keyword id="KW-0808">Transferase</keyword>
<organism>
    <name type="scientific">Bacillus cereus (strain ATCC 14579 / DSM 31 / CCUG 7414 / JCM 2152 / NBRC 15305 / NCIMB 9373 / NCTC 2599 / NRRL B-3711)</name>
    <dbReference type="NCBI Taxonomy" id="226900"/>
    <lineage>
        <taxon>Bacteria</taxon>
        <taxon>Bacillati</taxon>
        <taxon>Bacillota</taxon>
        <taxon>Bacilli</taxon>
        <taxon>Bacillales</taxon>
        <taxon>Bacillaceae</taxon>
        <taxon>Bacillus</taxon>
        <taxon>Bacillus cereus group</taxon>
    </lineage>
</organism>
<gene>
    <name evidence="1" type="primary">glgC</name>
    <name type="ordered locus">BC_4866</name>
</gene>
<reference key="1">
    <citation type="journal article" date="2003" name="Nature">
        <title>Genome sequence of Bacillus cereus and comparative analysis with Bacillus anthracis.</title>
        <authorList>
            <person name="Ivanova N."/>
            <person name="Sorokin A."/>
            <person name="Anderson I."/>
            <person name="Galleron N."/>
            <person name="Candelon B."/>
            <person name="Kapatral V."/>
            <person name="Bhattacharyya A."/>
            <person name="Reznik G."/>
            <person name="Mikhailova N."/>
            <person name="Lapidus A."/>
            <person name="Chu L."/>
            <person name="Mazur M."/>
            <person name="Goltsman E."/>
            <person name="Larsen N."/>
            <person name="D'Souza M."/>
            <person name="Walunas T."/>
            <person name="Grechkin Y."/>
            <person name="Pusch G."/>
            <person name="Haselkorn R."/>
            <person name="Fonstein M."/>
            <person name="Ehrlich S.D."/>
            <person name="Overbeek R."/>
            <person name="Kyrpides N.C."/>
        </authorList>
    </citation>
    <scope>NUCLEOTIDE SEQUENCE [LARGE SCALE GENOMIC DNA]</scope>
    <source>
        <strain>ATCC 14579 / DSM 31 / CCUG 7414 / JCM 2152 / NBRC 15305 / NCIMB 9373 / NCTC 2599 / NRRL B-3711</strain>
    </source>
</reference>
<name>GLGC_BACCR</name>
<feature type="chain" id="PRO_0000195278" description="Glucose-1-phosphate adenylyltransferase">
    <location>
        <begin position="1"/>
        <end position="376"/>
    </location>
</feature>
<feature type="binding site" evidence="1">
    <location>
        <position position="101"/>
    </location>
    <ligand>
        <name>alpha-D-glucose 1-phosphate</name>
        <dbReference type="ChEBI" id="CHEBI:58601"/>
    </ligand>
</feature>
<feature type="binding site" evidence="1">
    <location>
        <position position="166"/>
    </location>
    <ligand>
        <name>alpha-D-glucose 1-phosphate</name>
        <dbReference type="ChEBI" id="CHEBI:58601"/>
    </ligand>
</feature>
<feature type="binding site" evidence="1">
    <location>
        <begin position="181"/>
        <end position="182"/>
    </location>
    <ligand>
        <name>alpha-D-glucose 1-phosphate</name>
        <dbReference type="ChEBI" id="CHEBI:58601"/>
    </ligand>
</feature>
<feature type="binding site" evidence="1">
    <location>
        <position position="192"/>
    </location>
    <ligand>
        <name>alpha-D-glucose 1-phosphate</name>
        <dbReference type="ChEBI" id="CHEBI:58601"/>
    </ligand>
</feature>
<dbReference type="EC" id="2.7.7.27" evidence="1"/>
<dbReference type="EMBL" id="AE016877">
    <property type="protein sequence ID" value="AAP11765.1"/>
    <property type="molecule type" value="Genomic_DNA"/>
</dbReference>
<dbReference type="RefSeq" id="NP_834564.1">
    <property type="nucleotide sequence ID" value="NC_004722.1"/>
</dbReference>
<dbReference type="RefSeq" id="WP_000057619.1">
    <property type="nucleotide sequence ID" value="NZ_CP138336.1"/>
</dbReference>
<dbReference type="SMR" id="Q816G7"/>
<dbReference type="STRING" id="226900.BC_4866"/>
<dbReference type="KEGG" id="bce:BC4866"/>
<dbReference type="PATRIC" id="fig|226900.8.peg.5039"/>
<dbReference type="HOGENOM" id="CLU_029499_14_0_9"/>
<dbReference type="OrthoDB" id="9801810at2"/>
<dbReference type="UniPathway" id="UPA00164"/>
<dbReference type="Proteomes" id="UP000001417">
    <property type="component" value="Chromosome"/>
</dbReference>
<dbReference type="GO" id="GO:0005524">
    <property type="term" value="F:ATP binding"/>
    <property type="evidence" value="ECO:0007669"/>
    <property type="project" value="UniProtKB-KW"/>
</dbReference>
<dbReference type="GO" id="GO:0008878">
    <property type="term" value="F:glucose-1-phosphate adenylyltransferase activity"/>
    <property type="evidence" value="ECO:0007669"/>
    <property type="project" value="UniProtKB-UniRule"/>
</dbReference>
<dbReference type="GO" id="GO:0005978">
    <property type="term" value="P:glycogen biosynthetic process"/>
    <property type="evidence" value="ECO:0007669"/>
    <property type="project" value="UniProtKB-UniRule"/>
</dbReference>
<dbReference type="CDD" id="cd02508">
    <property type="entry name" value="ADP_Glucose_PP"/>
    <property type="match status" value="1"/>
</dbReference>
<dbReference type="CDD" id="cd04651">
    <property type="entry name" value="LbH_G1P_AT_C"/>
    <property type="match status" value="1"/>
</dbReference>
<dbReference type="FunFam" id="2.160.10.10:FF:000022">
    <property type="entry name" value="Glucose-1-phosphate adenylyltransferase"/>
    <property type="match status" value="1"/>
</dbReference>
<dbReference type="FunFam" id="3.90.550.10:FF:000083">
    <property type="entry name" value="Glucose-1-phosphate adenylyltransferase"/>
    <property type="match status" value="1"/>
</dbReference>
<dbReference type="Gene3D" id="2.160.10.10">
    <property type="entry name" value="Hexapeptide repeat proteins"/>
    <property type="match status" value="1"/>
</dbReference>
<dbReference type="Gene3D" id="3.90.550.10">
    <property type="entry name" value="Spore Coat Polysaccharide Biosynthesis Protein SpsA, Chain A"/>
    <property type="match status" value="1"/>
</dbReference>
<dbReference type="HAMAP" id="MF_00624">
    <property type="entry name" value="GlgC"/>
    <property type="match status" value="1"/>
</dbReference>
<dbReference type="InterPro" id="IPR011831">
    <property type="entry name" value="ADP-Glc_PPase"/>
</dbReference>
<dbReference type="InterPro" id="IPR005836">
    <property type="entry name" value="ADP_Glu_pyroP_CS"/>
</dbReference>
<dbReference type="InterPro" id="IPR023049">
    <property type="entry name" value="GlgC_bac"/>
</dbReference>
<dbReference type="InterPro" id="IPR056818">
    <property type="entry name" value="GlmU/GlgC-like_hexapep"/>
</dbReference>
<dbReference type="InterPro" id="IPR005835">
    <property type="entry name" value="NTP_transferase_dom"/>
</dbReference>
<dbReference type="InterPro" id="IPR029044">
    <property type="entry name" value="Nucleotide-diphossugar_trans"/>
</dbReference>
<dbReference type="InterPro" id="IPR011004">
    <property type="entry name" value="Trimer_LpxA-like_sf"/>
</dbReference>
<dbReference type="NCBIfam" id="TIGR02091">
    <property type="entry name" value="glgC"/>
    <property type="match status" value="1"/>
</dbReference>
<dbReference type="NCBIfam" id="NF003670">
    <property type="entry name" value="PRK05293.1"/>
    <property type="match status" value="1"/>
</dbReference>
<dbReference type="PANTHER" id="PTHR43523:SF2">
    <property type="entry name" value="GLUCOSE-1-PHOSPHATE ADENYLYLTRANSFERASE"/>
    <property type="match status" value="1"/>
</dbReference>
<dbReference type="PANTHER" id="PTHR43523">
    <property type="entry name" value="GLUCOSE-1-PHOSPHATE ADENYLYLTRANSFERASE-RELATED"/>
    <property type="match status" value="1"/>
</dbReference>
<dbReference type="Pfam" id="PF24894">
    <property type="entry name" value="Hexapep_GlmU"/>
    <property type="match status" value="1"/>
</dbReference>
<dbReference type="Pfam" id="PF00483">
    <property type="entry name" value="NTP_transferase"/>
    <property type="match status" value="1"/>
</dbReference>
<dbReference type="SUPFAM" id="SSF53448">
    <property type="entry name" value="Nucleotide-diphospho-sugar transferases"/>
    <property type="match status" value="1"/>
</dbReference>
<dbReference type="SUPFAM" id="SSF51161">
    <property type="entry name" value="Trimeric LpxA-like enzymes"/>
    <property type="match status" value="1"/>
</dbReference>
<dbReference type="PROSITE" id="PS00808">
    <property type="entry name" value="ADP_GLC_PYROPHOSPH_1"/>
    <property type="match status" value="1"/>
</dbReference>
<dbReference type="PROSITE" id="PS00809">
    <property type="entry name" value="ADP_GLC_PYROPHOSPH_2"/>
    <property type="match status" value="1"/>
</dbReference>
<dbReference type="PROSITE" id="PS00810">
    <property type="entry name" value="ADP_GLC_PYROPHOSPH_3"/>
    <property type="match status" value="1"/>
</dbReference>
<protein>
    <recommendedName>
        <fullName evidence="1">Glucose-1-phosphate adenylyltransferase</fullName>
        <ecNumber evidence="1">2.7.7.27</ecNumber>
    </recommendedName>
    <alternativeName>
        <fullName evidence="1">ADP-glucose pyrophosphorylase</fullName>
        <shortName evidence="1">ADPGlc PPase</shortName>
    </alternativeName>
    <alternativeName>
        <fullName evidence="1">ADP-glucose synthase</fullName>
    </alternativeName>
</protein>
<accession>Q816G7</accession>
<proteinExistence type="inferred from homology"/>
<comment type="function">
    <text evidence="1">Involved in the biosynthesis of ADP-glucose, a building block required for the elongation reactions to produce glycogen. Catalyzes the reaction between ATP and alpha-D-glucose 1-phosphate (G1P) to produce pyrophosphate and ADP-Glc.</text>
</comment>
<comment type="catalytic activity">
    <reaction evidence="1">
        <text>alpha-D-glucose 1-phosphate + ATP + H(+) = ADP-alpha-D-glucose + diphosphate</text>
        <dbReference type="Rhea" id="RHEA:12120"/>
        <dbReference type="ChEBI" id="CHEBI:15378"/>
        <dbReference type="ChEBI" id="CHEBI:30616"/>
        <dbReference type="ChEBI" id="CHEBI:33019"/>
        <dbReference type="ChEBI" id="CHEBI:57498"/>
        <dbReference type="ChEBI" id="CHEBI:58601"/>
        <dbReference type="EC" id="2.7.7.27"/>
    </reaction>
</comment>
<comment type="pathway">
    <text evidence="1">Glycan biosynthesis; glycogen biosynthesis.</text>
</comment>
<comment type="subunit">
    <text evidence="1">Homotetramer.</text>
</comment>
<comment type="similarity">
    <text evidence="1">Belongs to the bacterial/plant glucose-1-phosphate adenylyltransferase family.</text>
</comment>
<sequence length="376" mass="42065">MAQKQKCVAMLLAGGKGSRLSALTKNLAKPAVPFGGKYRIIDFTLSNCANSGIETVGILTQYQPLELHNYIGIGNAWDLDRVSGGVTVLPPYAESSGVKWYTGTASAIYQNLNYLSQYEPEYVLILSGDHIYKMDYSKMLDYHIEKESDVSISVIEVPWDEASRFGIMNTNEEMEIVEFEEKPQFPRSNLASMGIYIFNWSILKEYLEMDARNPESSNDFGKDVLPLLLDEGKKLMAYPFEGYWKDVGTVKSLWEANMDLLRDETSLNLNDRNWRIYSVNPNEPPQYIAEKAKVEESLINEGCVIEGDVKHSVLFQGVTVEEGSMVIDSVVMPGAKIGKNVVIERAIVGSEMVIEDGTIIRPEKNVDDVVLIAEGK</sequence>
<evidence type="ECO:0000255" key="1">
    <source>
        <dbReference type="HAMAP-Rule" id="MF_00624"/>
    </source>
</evidence>